<gene>
    <name evidence="1" type="primary">rpmH</name>
    <name type="ordered locus">Ldb2218</name>
</gene>
<feature type="chain" id="PRO_1000013359" description="Large ribosomal subunit protein bL34">
    <location>
        <begin position="1"/>
        <end position="46"/>
    </location>
</feature>
<feature type="region of interest" description="Disordered" evidence="2">
    <location>
        <begin position="26"/>
        <end position="46"/>
    </location>
</feature>
<feature type="compositionally biased region" description="Basic residues" evidence="2">
    <location>
        <begin position="32"/>
        <end position="46"/>
    </location>
</feature>
<proteinExistence type="inferred from homology"/>
<protein>
    <recommendedName>
        <fullName evidence="1">Large ribosomal subunit protein bL34</fullName>
    </recommendedName>
    <alternativeName>
        <fullName evidence="3">50S ribosomal protein L34</fullName>
    </alternativeName>
</protein>
<dbReference type="EMBL" id="CR954253">
    <property type="protein sequence ID" value="CAI98942.1"/>
    <property type="molecule type" value="Genomic_DNA"/>
</dbReference>
<dbReference type="RefSeq" id="WP_008459582.1">
    <property type="nucleotide sequence ID" value="NZ_JQAV01000011.1"/>
</dbReference>
<dbReference type="SMR" id="Q1G7Z1"/>
<dbReference type="STRING" id="390333.Ldb2218"/>
<dbReference type="KEGG" id="ldb:Ldb2218"/>
<dbReference type="eggNOG" id="COG0230">
    <property type="taxonomic scope" value="Bacteria"/>
</dbReference>
<dbReference type="HOGENOM" id="CLU_129938_2_0_9"/>
<dbReference type="BioCyc" id="LDEL390333:LDB_RS10350-MONOMER"/>
<dbReference type="Proteomes" id="UP000001259">
    <property type="component" value="Chromosome"/>
</dbReference>
<dbReference type="GO" id="GO:1990904">
    <property type="term" value="C:ribonucleoprotein complex"/>
    <property type="evidence" value="ECO:0007669"/>
    <property type="project" value="UniProtKB-KW"/>
</dbReference>
<dbReference type="GO" id="GO:0005840">
    <property type="term" value="C:ribosome"/>
    <property type="evidence" value="ECO:0007669"/>
    <property type="project" value="UniProtKB-KW"/>
</dbReference>
<dbReference type="GO" id="GO:0003735">
    <property type="term" value="F:structural constituent of ribosome"/>
    <property type="evidence" value="ECO:0007669"/>
    <property type="project" value="InterPro"/>
</dbReference>
<dbReference type="GO" id="GO:0006412">
    <property type="term" value="P:translation"/>
    <property type="evidence" value="ECO:0007669"/>
    <property type="project" value="UniProtKB-UniRule"/>
</dbReference>
<dbReference type="FunFam" id="1.10.287.3980:FF:000001">
    <property type="entry name" value="Mitochondrial ribosomal protein L34"/>
    <property type="match status" value="1"/>
</dbReference>
<dbReference type="Gene3D" id="1.10.287.3980">
    <property type="match status" value="1"/>
</dbReference>
<dbReference type="HAMAP" id="MF_00391">
    <property type="entry name" value="Ribosomal_bL34"/>
    <property type="match status" value="1"/>
</dbReference>
<dbReference type="InterPro" id="IPR000271">
    <property type="entry name" value="Ribosomal_bL34"/>
</dbReference>
<dbReference type="InterPro" id="IPR020939">
    <property type="entry name" value="Ribosomal_bL34_CS"/>
</dbReference>
<dbReference type="NCBIfam" id="TIGR01030">
    <property type="entry name" value="rpmH_bact"/>
    <property type="match status" value="1"/>
</dbReference>
<dbReference type="PANTHER" id="PTHR14503:SF4">
    <property type="entry name" value="LARGE RIBOSOMAL SUBUNIT PROTEIN BL34M"/>
    <property type="match status" value="1"/>
</dbReference>
<dbReference type="PANTHER" id="PTHR14503">
    <property type="entry name" value="MITOCHONDRIAL RIBOSOMAL PROTEIN 34 FAMILY MEMBER"/>
    <property type="match status" value="1"/>
</dbReference>
<dbReference type="Pfam" id="PF00468">
    <property type="entry name" value="Ribosomal_L34"/>
    <property type="match status" value="1"/>
</dbReference>
<dbReference type="PROSITE" id="PS00784">
    <property type="entry name" value="RIBOSOMAL_L34"/>
    <property type="match status" value="1"/>
</dbReference>
<organism>
    <name type="scientific">Lactobacillus delbrueckii subsp. bulgaricus (strain ATCC 11842 / DSM 20081 / BCRC 10696 / JCM 1002 / NBRC 13953 / NCIMB 11778 / NCTC 12712 / WDCM 00102 / Lb 14)</name>
    <dbReference type="NCBI Taxonomy" id="390333"/>
    <lineage>
        <taxon>Bacteria</taxon>
        <taxon>Bacillati</taxon>
        <taxon>Bacillota</taxon>
        <taxon>Bacilli</taxon>
        <taxon>Lactobacillales</taxon>
        <taxon>Lactobacillaceae</taxon>
        <taxon>Lactobacillus</taxon>
    </lineage>
</organism>
<sequence length="46" mass="5425">MSTKRTYQPKKRHRSRVHGFMKRMATSNGRKVLARRRAKGRKVLSA</sequence>
<keyword id="KW-1185">Reference proteome</keyword>
<keyword id="KW-0687">Ribonucleoprotein</keyword>
<keyword id="KW-0689">Ribosomal protein</keyword>
<name>RL34_LACDA</name>
<comment type="similarity">
    <text evidence="1">Belongs to the bacterial ribosomal protein bL34 family.</text>
</comment>
<reference key="1">
    <citation type="journal article" date="2006" name="Proc. Natl. Acad. Sci. U.S.A.">
        <title>The complete genome sequence of Lactobacillus bulgaricus reveals extensive and ongoing reductive evolution.</title>
        <authorList>
            <person name="van de Guchte M."/>
            <person name="Penaud S."/>
            <person name="Grimaldi C."/>
            <person name="Barbe V."/>
            <person name="Bryson K."/>
            <person name="Nicolas P."/>
            <person name="Robert C."/>
            <person name="Oztas S."/>
            <person name="Mangenot S."/>
            <person name="Couloux A."/>
            <person name="Loux V."/>
            <person name="Dervyn R."/>
            <person name="Bossy R."/>
            <person name="Bolotin A."/>
            <person name="Batto J.-M."/>
            <person name="Walunas T."/>
            <person name="Gibrat J.-F."/>
            <person name="Bessieres P."/>
            <person name="Weissenbach J."/>
            <person name="Ehrlich S.D."/>
            <person name="Maguin E."/>
        </authorList>
    </citation>
    <scope>NUCLEOTIDE SEQUENCE [LARGE SCALE GENOMIC DNA]</scope>
    <source>
        <strain>ATCC 11842 / DSM 20081 / BCRC 10696 / JCM 1002 / NBRC 13953 / NCIMB 11778 / NCTC 12712 / WDCM 00102 / Lb 14</strain>
    </source>
</reference>
<accession>Q1G7Z1</accession>
<evidence type="ECO:0000255" key="1">
    <source>
        <dbReference type="HAMAP-Rule" id="MF_00391"/>
    </source>
</evidence>
<evidence type="ECO:0000256" key="2">
    <source>
        <dbReference type="SAM" id="MobiDB-lite"/>
    </source>
</evidence>
<evidence type="ECO:0000305" key="3"/>